<dbReference type="EC" id="5.4.2.12" evidence="1"/>
<dbReference type="EMBL" id="CP001403">
    <property type="protein sequence ID" value="ACP46060.1"/>
    <property type="molecule type" value="Genomic_DNA"/>
</dbReference>
<dbReference type="RefSeq" id="WP_012713908.1">
    <property type="nucleotide sequence ID" value="NC_012622.1"/>
</dbReference>
<dbReference type="SMR" id="C3N766"/>
<dbReference type="GeneID" id="7807491"/>
<dbReference type="KEGG" id="siy:YG5714_1803"/>
<dbReference type="HOGENOM" id="CLU_034906_2_0_2"/>
<dbReference type="UniPathway" id="UPA00109">
    <property type="reaction ID" value="UER00186"/>
</dbReference>
<dbReference type="Proteomes" id="UP000002308">
    <property type="component" value="Chromosome"/>
</dbReference>
<dbReference type="GO" id="GO:0046872">
    <property type="term" value="F:metal ion binding"/>
    <property type="evidence" value="ECO:0007669"/>
    <property type="project" value="InterPro"/>
</dbReference>
<dbReference type="GO" id="GO:0004619">
    <property type="term" value="F:phosphoglycerate mutase activity"/>
    <property type="evidence" value="ECO:0007669"/>
    <property type="project" value="UniProtKB-EC"/>
</dbReference>
<dbReference type="GO" id="GO:0006096">
    <property type="term" value="P:glycolytic process"/>
    <property type="evidence" value="ECO:0007669"/>
    <property type="project" value="UniProtKB-UniRule"/>
</dbReference>
<dbReference type="CDD" id="cd16011">
    <property type="entry name" value="iPGM_like"/>
    <property type="match status" value="1"/>
</dbReference>
<dbReference type="Gene3D" id="3.40.720.10">
    <property type="entry name" value="Alkaline Phosphatase, subunit A"/>
    <property type="match status" value="1"/>
</dbReference>
<dbReference type="Gene3D" id="3.30.70.2130">
    <property type="entry name" value="Metalloenzyme domain"/>
    <property type="match status" value="1"/>
</dbReference>
<dbReference type="HAMAP" id="MF_01402_A">
    <property type="entry name" value="ApgM_A"/>
    <property type="match status" value="1"/>
</dbReference>
<dbReference type="InterPro" id="IPR017850">
    <property type="entry name" value="Alkaline_phosphatase_core_sf"/>
</dbReference>
<dbReference type="InterPro" id="IPR023665">
    <property type="entry name" value="ApgAM_prokaryotes"/>
</dbReference>
<dbReference type="InterPro" id="IPR006124">
    <property type="entry name" value="Metalloenzyme"/>
</dbReference>
<dbReference type="InterPro" id="IPR004456">
    <property type="entry name" value="Pglycerate_mutase_ApgM"/>
</dbReference>
<dbReference type="InterPro" id="IPR042253">
    <property type="entry name" value="Pglycerate_mutase_ApgM_sf"/>
</dbReference>
<dbReference type="NCBIfam" id="TIGR00306">
    <property type="entry name" value="apgM"/>
    <property type="match status" value="1"/>
</dbReference>
<dbReference type="NCBIfam" id="NF003104">
    <property type="entry name" value="PRK04024.1"/>
    <property type="match status" value="1"/>
</dbReference>
<dbReference type="PANTHER" id="PTHR31209">
    <property type="entry name" value="COFACTOR-INDEPENDENT PHOSPHOGLYCERATE MUTASE"/>
    <property type="match status" value="1"/>
</dbReference>
<dbReference type="PANTHER" id="PTHR31209:SF0">
    <property type="entry name" value="METALLOENZYME DOMAIN-CONTAINING PROTEIN"/>
    <property type="match status" value="1"/>
</dbReference>
<dbReference type="Pfam" id="PF01676">
    <property type="entry name" value="Metalloenzyme"/>
    <property type="match status" value="1"/>
</dbReference>
<dbReference type="Pfam" id="PF10143">
    <property type="entry name" value="PhosphMutase"/>
    <property type="match status" value="1"/>
</dbReference>
<dbReference type="PIRSF" id="PIRSF006392">
    <property type="entry name" value="IPGAM_arch"/>
    <property type="match status" value="1"/>
</dbReference>
<dbReference type="SUPFAM" id="SSF53649">
    <property type="entry name" value="Alkaline phosphatase-like"/>
    <property type="match status" value="1"/>
</dbReference>
<organism>
    <name type="scientific">Saccharolobus islandicus (strain Y.G.57.14 / Yellowstone #1)</name>
    <name type="common">Sulfolobus islandicus</name>
    <dbReference type="NCBI Taxonomy" id="439386"/>
    <lineage>
        <taxon>Archaea</taxon>
        <taxon>Thermoproteota</taxon>
        <taxon>Thermoprotei</taxon>
        <taxon>Sulfolobales</taxon>
        <taxon>Sulfolobaceae</taxon>
        <taxon>Saccharolobus</taxon>
    </lineage>
</organism>
<gene>
    <name evidence="1" type="primary">apgM</name>
    <name type="ordered locus">YG5714_1803</name>
</gene>
<name>APGM_SACI7</name>
<accession>C3N766</accession>
<keyword id="KW-0324">Glycolysis</keyword>
<keyword id="KW-0413">Isomerase</keyword>
<feature type="chain" id="PRO_1000215196" description="2,3-bisphosphoglycerate-independent phosphoglycerate mutase">
    <location>
        <begin position="1"/>
        <end position="414"/>
    </location>
</feature>
<comment type="function">
    <text evidence="1">Catalyzes the interconversion of 2-phosphoglycerate and 3-phosphoglycerate.</text>
</comment>
<comment type="catalytic activity">
    <reaction evidence="1">
        <text>(2R)-2-phosphoglycerate = (2R)-3-phosphoglycerate</text>
        <dbReference type="Rhea" id="RHEA:15901"/>
        <dbReference type="ChEBI" id="CHEBI:58272"/>
        <dbReference type="ChEBI" id="CHEBI:58289"/>
        <dbReference type="EC" id="5.4.2.12"/>
    </reaction>
</comment>
<comment type="pathway">
    <text evidence="1">Carbohydrate degradation; glycolysis; pyruvate from D-glyceraldehyde 3-phosphate: step 3/5.</text>
</comment>
<comment type="similarity">
    <text evidence="1">Belongs to the BPG-independent phosphoglycerate mutase family. A-PGAM subfamily.</text>
</comment>
<reference key="1">
    <citation type="journal article" date="2009" name="Proc. Natl. Acad. Sci. U.S.A.">
        <title>Biogeography of the Sulfolobus islandicus pan-genome.</title>
        <authorList>
            <person name="Reno M.L."/>
            <person name="Held N.L."/>
            <person name="Fields C.J."/>
            <person name="Burke P.V."/>
            <person name="Whitaker R.J."/>
        </authorList>
    </citation>
    <scope>NUCLEOTIDE SEQUENCE [LARGE SCALE GENOMIC DNA]</scope>
    <source>
        <strain>Y.G.57.14 / Yellowstone #1</strain>
    </source>
</reference>
<proteinExistence type="inferred from homology"/>
<sequence length="414" mass="45239">MKQYKILLIIADGLGDRPVSKLNGLTPLEAANKPAISDLLKNSMIGLMDPISPGVIPGSDTSHLSIFGLDPHVYYRGRGAFEALGAGATLKHGDVAFRGNFATVNNDLVVVDRRAGRKLEEGEELVKELNEKIKEINDVKIRFYKGTEHRVAVVLSGKGISDKVSDTDPHYEGLKVLESKPLEDSTEALRTAEIINILTRKVFDVLNSSEVNKRRIEQGEKPANIVLLRGAAHYIKLPSFSSYTKLKAAAVSATALIKGICRELGMNVVTPVGATGGIDTDYNAKAKAAIELLKENDFVFLHIKATDAASHDGLVEEKVKAIERIDKVIGTIVDNVGRDNLILMFTGDHATPVEVKEHSGDPVPILLYVPYPIINDNVRDFNEKEARKGSLRIRGLDVTNILLNYSNRAEKYGA</sequence>
<evidence type="ECO:0000255" key="1">
    <source>
        <dbReference type="HAMAP-Rule" id="MF_01402"/>
    </source>
</evidence>
<protein>
    <recommendedName>
        <fullName evidence="1">2,3-bisphosphoglycerate-independent phosphoglycerate mutase</fullName>
        <shortName evidence="1">BPG-independent PGAM</shortName>
        <shortName evidence="1">Phosphoglyceromutase</shortName>
        <shortName evidence="1">aPGAM</shortName>
        <ecNumber evidence="1">5.4.2.12</ecNumber>
    </recommendedName>
</protein>